<organism>
    <name type="scientific">Carboxydothermus hydrogenoformans (strain ATCC BAA-161 / DSM 6008 / Z-2901)</name>
    <dbReference type="NCBI Taxonomy" id="246194"/>
    <lineage>
        <taxon>Bacteria</taxon>
        <taxon>Bacillati</taxon>
        <taxon>Bacillota</taxon>
        <taxon>Clostridia</taxon>
        <taxon>Thermoanaerobacterales</taxon>
        <taxon>Thermoanaerobacteraceae</taxon>
        <taxon>Carboxydothermus</taxon>
    </lineage>
</organism>
<accession>Q3A9Z9</accession>
<sequence>MRAVVQRVKRGKVTVDGQVVSEIGPGLVALVGIRQGDGERECRYLAEKLVNLRIFEDGKGKFNYSVKDVGGEILVVSNFTVYGDTRKGRRPSFTEAAPPEVAREVFERFLDILKEQEVSVKSGIFQATMEVEIINDGPVTVIVEI</sequence>
<evidence type="ECO:0000255" key="1">
    <source>
        <dbReference type="HAMAP-Rule" id="MF_00518"/>
    </source>
</evidence>
<keyword id="KW-0963">Cytoplasm</keyword>
<keyword id="KW-0378">Hydrolase</keyword>
<keyword id="KW-1185">Reference proteome</keyword>
<keyword id="KW-0694">RNA-binding</keyword>
<keyword id="KW-0820">tRNA-binding</keyword>
<comment type="function">
    <text evidence="1">An aminoacyl-tRNA editing enzyme that deacylates mischarged D-aminoacyl-tRNAs. Also deacylates mischarged glycyl-tRNA(Ala), protecting cells against glycine mischarging by AlaRS. Acts via tRNA-based rather than protein-based catalysis; rejects L-amino acids rather than detecting D-amino acids in the active site. By recycling D-aminoacyl-tRNA to D-amino acids and free tRNA molecules, this enzyme counteracts the toxicity associated with the formation of D-aminoacyl-tRNA entities in vivo and helps enforce protein L-homochirality.</text>
</comment>
<comment type="catalytic activity">
    <reaction evidence="1">
        <text>glycyl-tRNA(Ala) + H2O = tRNA(Ala) + glycine + H(+)</text>
        <dbReference type="Rhea" id="RHEA:53744"/>
        <dbReference type="Rhea" id="RHEA-COMP:9657"/>
        <dbReference type="Rhea" id="RHEA-COMP:13640"/>
        <dbReference type="ChEBI" id="CHEBI:15377"/>
        <dbReference type="ChEBI" id="CHEBI:15378"/>
        <dbReference type="ChEBI" id="CHEBI:57305"/>
        <dbReference type="ChEBI" id="CHEBI:78442"/>
        <dbReference type="ChEBI" id="CHEBI:78522"/>
        <dbReference type="EC" id="3.1.1.96"/>
    </reaction>
</comment>
<comment type="catalytic activity">
    <reaction evidence="1">
        <text>a D-aminoacyl-tRNA + H2O = a tRNA + a D-alpha-amino acid + H(+)</text>
        <dbReference type="Rhea" id="RHEA:13953"/>
        <dbReference type="Rhea" id="RHEA-COMP:10123"/>
        <dbReference type="Rhea" id="RHEA-COMP:10124"/>
        <dbReference type="ChEBI" id="CHEBI:15377"/>
        <dbReference type="ChEBI" id="CHEBI:15378"/>
        <dbReference type="ChEBI" id="CHEBI:59871"/>
        <dbReference type="ChEBI" id="CHEBI:78442"/>
        <dbReference type="ChEBI" id="CHEBI:79333"/>
        <dbReference type="EC" id="3.1.1.96"/>
    </reaction>
</comment>
<comment type="subunit">
    <text evidence="1">Homodimer.</text>
</comment>
<comment type="subcellular location">
    <subcellularLocation>
        <location evidence="1">Cytoplasm</location>
    </subcellularLocation>
</comment>
<comment type="domain">
    <text evidence="1">A Gly-cisPro motif from one monomer fits into the active site of the other monomer to allow specific chiral rejection of L-amino acids.</text>
</comment>
<comment type="similarity">
    <text evidence="1">Belongs to the DTD family.</text>
</comment>
<dbReference type="EC" id="3.1.1.96" evidence="1"/>
<dbReference type="EMBL" id="CP000141">
    <property type="protein sequence ID" value="ABB14023.1"/>
    <property type="molecule type" value="Genomic_DNA"/>
</dbReference>
<dbReference type="RefSeq" id="WP_011345108.1">
    <property type="nucleotide sequence ID" value="NC_007503.1"/>
</dbReference>
<dbReference type="SMR" id="Q3A9Z9"/>
<dbReference type="FunCoup" id="Q3A9Z9">
    <property type="interactions" value="326"/>
</dbReference>
<dbReference type="STRING" id="246194.CHY_2222"/>
<dbReference type="KEGG" id="chy:CHY_2222"/>
<dbReference type="eggNOG" id="COG1490">
    <property type="taxonomic scope" value="Bacteria"/>
</dbReference>
<dbReference type="HOGENOM" id="CLU_076901_1_0_9"/>
<dbReference type="InParanoid" id="Q3A9Z9"/>
<dbReference type="OrthoDB" id="9801395at2"/>
<dbReference type="Proteomes" id="UP000002706">
    <property type="component" value="Chromosome"/>
</dbReference>
<dbReference type="GO" id="GO:0005737">
    <property type="term" value="C:cytoplasm"/>
    <property type="evidence" value="ECO:0007669"/>
    <property type="project" value="UniProtKB-SubCell"/>
</dbReference>
<dbReference type="GO" id="GO:0051500">
    <property type="term" value="F:D-tyrosyl-tRNA(Tyr) deacylase activity"/>
    <property type="evidence" value="ECO:0007669"/>
    <property type="project" value="TreeGrafter"/>
</dbReference>
<dbReference type="GO" id="GO:0106026">
    <property type="term" value="F:Gly-tRNA(Ala) deacylase activity"/>
    <property type="evidence" value="ECO:0007669"/>
    <property type="project" value="UniProtKB-UniRule"/>
</dbReference>
<dbReference type="GO" id="GO:0043908">
    <property type="term" value="F:Ser(Gly)-tRNA(Ala) hydrolase activity"/>
    <property type="evidence" value="ECO:0007669"/>
    <property type="project" value="UniProtKB-UniRule"/>
</dbReference>
<dbReference type="GO" id="GO:0000049">
    <property type="term" value="F:tRNA binding"/>
    <property type="evidence" value="ECO:0007669"/>
    <property type="project" value="UniProtKB-UniRule"/>
</dbReference>
<dbReference type="GO" id="GO:0019478">
    <property type="term" value="P:D-amino acid catabolic process"/>
    <property type="evidence" value="ECO:0007669"/>
    <property type="project" value="UniProtKB-UniRule"/>
</dbReference>
<dbReference type="CDD" id="cd00563">
    <property type="entry name" value="Dtyr_deacylase"/>
    <property type="match status" value="1"/>
</dbReference>
<dbReference type="FunFam" id="3.50.80.10:FF:000001">
    <property type="entry name" value="D-aminoacyl-tRNA deacylase"/>
    <property type="match status" value="1"/>
</dbReference>
<dbReference type="Gene3D" id="3.50.80.10">
    <property type="entry name" value="D-tyrosyl-tRNA(Tyr) deacylase"/>
    <property type="match status" value="1"/>
</dbReference>
<dbReference type="HAMAP" id="MF_00518">
    <property type="entry name" value="Deacylase_Dtd"/>
    <property type="match status" value="1"/>
</dbReference>
<dbReference type="InterPro" id="IPR003732">
    <property type="entry name" value="Daa-tRNA_deacyls_DTD"/>
</dbReference>
<dbReference type="InterPro" id="IPR023509">
    <property type="entry name" value="DTD-like_sf"/>
</dbReference>
<dbReference type="NCBIfam" id="TIGR00256">
    <property type="entry name" value="D-aminoacyl-tRNA deacylase"/>
    <property type="match status" value="1"/>
</dbReference>
<dbReference type="PANTHER" id="PTHR10472:SF5">
    <property type="entry name" value="D-AMINOACYL-TRNA DEACYLASE 1"/>
    <property type="match status" value="1"/>
</dbReference>
<dbReference type="PANTHER" id="PTHR10472">
    <property type="entry name" value="D-TYROSYL-TRNA TYR DEACYLASE"/>
    <property type="match status" value="1"/>
</dbReference>
<dbReference type="Pfam" id="PF02580">
    <property type="entry name" value="Tyr_Deacylase"/>
    <property type="match status" value="1"/>
</dbReference>
<dbReference type="SUPFAM" id="SSF69500">
    <property type="entry name" value="DTD-like"/>
    <property type="match status" value="1"/>
</dbReference>
<reference key="1">
    <citation type="journal article" date="2005" name="PLoS Genet.">
        <title>Life in hot carbon monoxide: the complete genome sequence of Carboxydothermus hydrogenoformans Z-2901.</title>
        <authorList>
            <person name="Wu M."/>
            <person name="Ren Q."/>
            <person name="Durkin A.S."/>
            <person name="Daugherty S.C."/>
            <person name="Brinkac L.M."/>
            <person name="Dodson R.J."/>
            <person name="Madupu R."/>
            <person name="Sullivan S.A."/>
            <person name="Kolonay J.F."/>
            <person name="Nelson W.C."/>
            <person name="Tallon L.J."/>
            <person name="Jones K.M."/>
            <person name="Ulrich L.E."/>
            <person name="Gonzalez J.M."/>
            <person name="Zhulin I.B."/>
            <person name="Robb F.T."/>
            <person name="Eisen J.A."/>
        </authorList>
    </citation>
    <scope>NUCLEOTIDE SEQUENCE [LARGE SCALE GENOMIC DNA]</scope>
    <source>
        <strain>ATCC BAA-161 / DSM 6008 / Z-2901</strain>
    </source>
</reference>
<gene>
    <name evidence="1" type="primary">dtd</name>
    <name type="ordered locus">CHY_2222</name>
</gene>
<protein>
    <recommendedName>
        <fullName evidence="1">D-aminoacyl-tRNA deacylase</fullName>
        <shortName evidence="1">DTD</shortName>
        <ecNumber evidence="1">3.1.1.96</ecNumber>
    </recommendedName>
    <alternativeName>
        <fullName evidence="1">Gly-tRNA(Ala) deacylase</fullName>
    </alternativeName>
</protein>
<name>DTD_CARHZ</name>
<feature type="chain" id="PRO_0000259269" description="D-aminoacyl-tRNA deacylase">
    <location>
        <begin position="1"/>
        <end position="145"/>
    </location>
</feature>
<feature type="short sequence motif" description="Gly-cisPro motif, important for rejection of L-amino acids" evidence="1">
    <location>
        <begin position="137"/>
        <end position="138"/>
    </location>
</feature>
<proteinExistence type="inferred from homology"/>